<gene>
    <name evidence="1" type="primary">nuoB</name>
    <name type="ordered locus">Francci3_0539</name>
</gene>
<name>NUOB_FRACC</name>
<feature type="chain" id="PRO_0000376234" description="NADH-quinone oxidoreductase subunit B">
    <location>
        <begin position="1"/>
        <end position="271"/>
    </location>
</feature>
<feature type="region of interest" description="Disordered" evidence="2">
    <location>
        <begin position="227"/>
        <end position="271"/>
    </location>
</feature>
<feature type="compositionally biased region" description="Basic and acidic residues" evidence="2">
    <location>
        <begin position="239"/>
        <end position="251"/>
    </location>
</feature>
<feature type="binding site" evidence="1">
    <location>
        <position position="37"/>
    </location>
    <ligand>
        <name>[4Fe-4S] cluster</name>
        <dbReference type="ChEBI" id="CHEBI:49883"/>
    </ligand>
</feature>
<feature type="binding site" evidence="1">
    <location>
        <position position="38"/>
    </location>
    <ligand>
        <name>[4Fe-4S] cluster</name>
        <dbReference type="ChEBI" id="CHEBI:49883"/>
    </ligand>
</feature>
<feature type="binding site" evidence="1">
    <location>
        <position position="103"/>
    </location>
    <ligand>
        <name>[4Fe-4S] cluster</name>
        <dbReference type="ChEBI" id="CHEBI:49883"/>
    </ligand>
</feature>
<feature type="binding site" evidence="1">
    <location>
        <position position="132"/>
    </location>
    <ligand>
        <name>[4Fe-4S] cluster</name>
        <dbReference type="ChEBI" id="CHEBI:49883"/>
    </ligand>
</feature>
<sequence length="271" mass="28893">MGLEEKLPGGVLLASVEKLANWSRRSSLWPATFGLACCAIEMMSTGAGRYDLSRFGMEVFRASPRQADLMIVAGRVSQKMAPVLRQIYDQMPEPKWVLSMGVCASSGGMFNNYAIVQGVDHIVPVDMYLPGCPPRPEMLMDAIIKLHEKILAGPISGRIEHTKIGSSPYPKPIEVATARAGLPEGAFDTRTLSVNDRKRFSIPAGAPAPTGGGAVEPALDTRRPAALAPPSVFGRAKRIPVDPKPSDEARAHGPGPTTESIGDVDGPDRGI</sequence>
<accession>Q2JFL9</accession>
<comment type="function">
    <text evidence="1">NDH-1 shuttles electrons from NADH, via FMN and iron-sulfur (Fe-S) centers, to quinones in the respiratory chain. The immediate electron acceptor for the enzyme in this species is believed to be a menaquinone. Couples the redox reaction to proton translocation (for every two electrons transferred, four hydrogen ions are translocated across the cytoplasmic membrane), and thus conserves the redox energy in a proton gradient.</text>
</comment>
<comment type="catalytic activity">
    <reaction evidence="1">
        <text>a quinone + NADH + 5 H(+)(in) = a quinol + NAD(+) + 4 H(+)(out)</text>
        <dbReference type="Rhea" id="RHEA:57888"/>
        <dbReference type="ChEBI" id="CHEBI:15378"/>
        <dbReference type="ChEBI" id="CHEBI:24646"/>
        <dbReference type="ChEBI" id="CHEBI:57540"/>
        <dbReference type="ChEBI" id="CHEBI:57945"/>
        <dbReference type="ChEBI" id="CHEBI:132124"/>
    </reaction>
</comment>
<comment type="cofactor">
    <cofactor evidence="1">
        <name>[4Fe-4S] cluster</name>
        <dbReference type="ChEBI" id="CHEBI:49883"/>
    </cofactor>
    <text evidence="1">Binds 1 [4Fe-4S] cluster.</text>
</comment>
<comment type="subunit">
    <text evidence="1">NDH-1 is composed of 14 different subunits. Subunits NuoB, C, D, E, F, and G constitute the peripheral sector of the complex.</text>
</comment>
<comment type="subcellular location">
    <subcellularLocation>
        <location evidence="1">Cell membrane</location>
        <topology evidence="1">Peripheral membrane protein</topology>
        <orientation evidence="1">Cytoplasmic side</orientation>
    </subcellularLocation>
</comment>
<comment type="similarity">
    <text evidence="1">Belongs to the complex I 20 kDa subunit family.</text>
</comment>
<proteinExistence type="inferred from homology"/>
<organism>
    <name type="scientific">Frankia casuarinae (strain DSM 45818 / CECT 9043 / HFP020203 / CcI3)</name>
    <dbReference type="NCBI Taxonomy" id="106370"/>
    <lineage>
        <taxon>Bacteria</taxon>
        <taxon>Bacillati</taxon>
        <taxon>Actinomycetota</taxon>
        <taxon>Actinomycetes</taxon>
        <taxon>Frankiales</taxon>
        <taxon>Frankiaceae</taxon>
        <taxon>Frankia</taxon>
    </lineage>
</organism>
<protein>
    <recommendedName>
        <fullName evidence="1">NADH-quinone oxidoreductase subunit B</fullName>
        <ecNumber evidence="1">7.1.1.-</ecNumber>
    </recommendedName>
    <alternativeName>
        <fullName evidence="1">NADH dehydrogenase I subunit B</fullName>
    </alternativeName>
    <alternativeName>
        <fullName evidence="1">NDH-1 subunit B</fullName>
    </alternativeName>
</protein>
<dbReference type="EC" id="7.1.1.-" evidence="1"/>
<dbReference type="EMBL" id="CP000249">
    <property type="protein sequence ID" value="ABD09923.1"/>
    <property type="molecule type" value="Genomic_DNA"/>
</dbReference>
<dbReference type="RefSeq" id="WP_011434999.1">
    <property type="nucleotide sequence ID" value="NC_007777.1"/>
</dbReference>
<dbReference type="SMR" id="Q2JFL9"/>
<dbReference type="STRING" id="106370.Francci3_0539"/>
<dbReference type="KEGG" id="fra:Francci3_0539"/>
<dbReference type="eggNOG" id="COG0377">
    <property type="taxonomic scope" value="Bacteria"/>
</dbReference>
<dbReference type="HOGENOM" id="CLU_083855_0_0_11"/>
<dbReference type="OrthoDB" id="9786737at2"/>
<dbReference type="PhylomeDB" id="Q2JFL9"/>
<dbReference type="Proteomes" id="UP000001937">
    <property type="component" value="Chromosome"/>
</dbReference>
<dbReference type="GO" id="GO:0005886">
    <property type="term" value="C:plasma membrane"/>
    <property type="evidence" value="ECO:0007669"/>
    <property type="project" value="UniProtKB-SubCell"/>
</dbReference>
<dbReference type="GO" id="GO:0045271">
    <property type="term" value="C:respiratory chain complex I"/>
    <property type="evidence" value="ECO:0007669"/>
    <property type="project" value="TreeGrafter"/>
</dbReference>
<dbReference type="GO" id="GO:0051539">
    <property type="term" value="F:4 iron, 4 sulfur cluster binding"/>
    <property type="evidence" value="ECO:0007669"/>
    <property type="project" value="UniProtKB-KW"/>
</dbReference>
<dbReference type="GO" id="GO:0005506">
    <property type="term" value="F:iron ion binding"/>
    <property type="evidence" value="ECO:0007669"/>
    <property type="project" value="UniProtKB-UniRule"/>
</dbReference>
<dbReference type="GO" id="GO:0008137">
    <property type="term" value="F:NADH dehydrogenase (ubiquinone) activity"/>
    <property type="evidence" value="ECO:0007669"/>
    <property type="project" value="InterPro"/>
</dbReference>
<dbReference type="GO" id="GO:0050136">
    <property type="term" value="F:NADH:ubiquinone reductase (non-electrogenic) activity"/>
    <property type="evidence" value="ECO:0007669"/>
    <property type="project" value="UniProtKB-UniRule"/>
</dbReference>
<dbReference type="GO" id="GO:0048038">
    <property type="term" value="F:quinone binding"/>
    <property type="evidence" value="ECO:0007669"/>
    <property type="project" value="UniProtKB-KW"/>
</dbReference>
<dbReference type="GO" id="GO:0009060">
    <property type="term" value="P:aerobic respiration"/>
    <property type="evidence" value="ECO:0007669"/>
    <property type="project" value="TreeGrafter"/>
</dbReference>
<dbReference type="GO" id="GO:0015990">
    <property type="term" value="P:electron transport coupled proton transport"/>
    <property type="evidence" value="ECO:0007669"/>
    <property type="project" value="TreeGrafter"/>
</dbReference>
<dbReference type="FunFam" id="3.40.50.12280:FF:000004">
    <property type="entry name" value="NADH-quinone oxidoreductase subunit B"/>
    <property type="match status" value="1"/>
</dbReference>
<dbReference type="Gene3D" id="3.40.50.12280">
    <property type="match status" value="1"/>
</dbReference>
<dbReference type="HAMAP" id="MF_01356">
    <property type="entry name" value="NDH1_NuoB"/>
    <property type="match status" value="1"/>
</dbReference>
<dbReference type="InterPro" id="IPR006137">
    <property type="entry name" value="NADH_UbQ_OxRdtase-like_20kDa"/>
</dbReference>
<dbReference type="InterPro" id="IPR006138">
    <property type="entry name" value="NADH_UQ_OxRdtase_20Kd_su"/>
</dbReference>
<dbReference type="NCBIfam" id="TIGR01957">
    <property type="entry name" value="nuoB_fam"/>
    <property type="match status" value="1"/>
</dbReference>
<dbReference type="NCBIfam" id="NF005012">
    <property type="entry name" value="PRK06411.1"/>
    <property type="match status" value="1"/>
</dbReference>
<dbReference type="PANTHER" id="PTHR11995">
    <property type="entry name" value="NADH DEHYDROGENASE"/>
    <property type="match status" value="1"/>
</dbReference>
<dbReference type="PANTHER" id="PTHR11995:SF14">
    <property type="entry name" value="NADH DEHYDROGENASE [UBIQUINONE] IRON-SULFUR PROTEIN 7, MITOCHONDRIAL"/>
    <property type="match status" value="1"/>
</dbReference>
<dbReference type="Pfam" id="PF01058">
    <property type="entry name" value="Oxidored_q6"/>
    <property type="match status" value="1"/>
</dbReference>
<dbReference type="SUPFAM" id="SSF56770">
    <property type="entry name" value="HydA/Nqo6-like"/>
    <property type="match status" value="1"/>
</dbReference>
<dbReference type="PROSITE" id="PS01150">
    <property type="entry name" value="COMPLEX1_20K"/>
    <property type="match status" value="1"/>
</dbReference>
<keyword id="KW-0004">4Fe-4S</keyword>
<keyword id="KW-1003">Cell membrane</keyword>
<keyword id="KW-0408">Iron</keyword>
<keyword id="KW-0411">Iron-sulfur</keyword>
<keyword id="KW-0472">Membrane</keyword>
<keyword id="KW-0479">Metal-binding</keyword>
<keyword id="KW-0520">NAD</keyword>
<keyword id="KW-0874">Quinone</keyword>
<keyword id="KW-1185">Reference proteome</keyword>
<keyword id="KW-1278">Translocase</keyword>
<keyword id="KW-0813">Transport</keyword>
<reference key="1">
    <citation type="journal article" date="2007" name="Genome Res.">
        <title>Genome characteristics of facultatively symbiotic Frankia sp. strains reflect host range and host plant biogeography.</title>
        <authorList>
            <person name="Normand P."/>
            <person name="Lapierre P."/>
            <person name="Tisa L.S."/>
            <person name="Gogarten J.P."/>
            <person name="Alloisio N."/>
            <person name="Bagnarol E."/>
            <person name="Bassi C.A."/>
            <person name="Berry A.M."/>
            <person name="Bickhart D.M."/>
            <person name="Choisne N."/>
            <person name="Couloux A."/>
            <person name="Cournoyer B."/>
            <person name="Cruveiller S."/>
            <person name="Daubin V."/>
            <person name="Demange N."/>
            <person name="Francino M.P."/>
            <person name="Goltsman E."/>
            <person name="Huang Y."/>
            <person name="Kopp O.R."/>
            <person name="Labarre L."/>
            <person name="Lapidus A."/>
            <person name="Lavire C."/>
            <person name="Marechal J."/>
            <person name="Martinez M."/>
            <person name="Mastronunzio J.E."/>
            <person name="Mullin B.C."/>
            <person name="Niemann J."/>
            <person name="Pujic P."/>
            <person name="Rawnsley T."/>
            <person name="Rouy Z."/>
            <person name="Schenowitz C."/>
            <person name="Sellstedt A."/>
            <person name="Tavares F."/>
            <person name="Tomkins J.P."/>
            <person name="Vallenet D."/>
            <person name="Valverde C."/>
            <person name="Wall L.G."/>
            <person name="Wang Y."/>
            <person name="Medigue C."/>
            <person name="Benson D.R."/>
        </authorList>
    </citation>
    <scope>NUCLEOTIDE SEQUENCE [LARGE SCALE GENOMIC DNA]</scope>
    <source>
        <strain>DSM 45818 / CECT 9043 / HFP020203 / CcI3</strain>
    </source>
</reference>
<evidence type="ECO:0000255" key="1">
    <source>
        <dbReference type="HAMAP-Rule" id="MF_01356"/>
    </source>
</evidence>
<evidence type="ECO:0000256" key="2">
    <source>
        <dbReference type="SAM" id="MobiDB-lite"/>
    </source>
</evidence>